<name>YEEN_SALTI</name>
<accession>Q8Z0Y7</accession>
<reference key="1">
    <citation type="journal article" date="2001" name="Nature">
        <title>Complete genome sequence of a multiple drug resistant Salmonella enterica serovar Typhi CT18.</title>
        <authorList>
            <person name="Parkhill J."/>
            <person name="Dougan G."/>
            <person name="James K.D."/>
            <person name="Thomson N.R."/>
            <person name="Pickard D."/>
            <person name="Wain J."/>
            <person name="Churcher C.M."/>
            <person name="Mungall K.L."/>
            <person name="Bentley S.D."/>
            <person name="Holden M.T.G."/>
            <person name="Sebaihia M."/>
            <person name="Baker S."/>
            <person name="Basham D."/>
            <person name="Brooks K."/>
            <person name="Chillingworth T."/>
            <person name="Connerton P."/>
            <person name="Cronin A."/>
            <person name="Davis P."/>
            <person name="Davies R.M."/>
            <person name="Dowd L."/>
            <person name="White N."/>
            <person name="Farrar J."/>
            <person name="Feltwell T."/>
            <person name="Hamlin N."/>
            <person name="Haque A."/>
            <person name="Hien T.T."/>
            <person name="Holroyd S."/>
            <person name="Jagels K."/>
            <person name="Krogh A."/>
            <person name="Larsen T.S."/>
            <person name="Leather S."/>
            <person name="Moule S."/>
            <person name="O'Gaora P."/>
            <person name="Parry C."/>
            <person name="Quail M.A."/>
            <person name="Rutherford K.M."/>
            <person name="Simmonds M."/>
            <person name="Skelton J."/>
            <person name="Stevens K."/>
            <person name="Whitehead S."/>
            <person name="Barrell B.G."/>
        </authorList>
    </citation>
    <scope>NUCLEOTIDE SEQUENCE [LARGE SCALE GENOMIC DNA]</scope>
    <source>
        <strain>CT18</strain>
    </source>
</reference>
<reference key="2">
    <citation type="journal article" date="2003" name="J. Bacteriol.">
        <title>Comparative genomics of Salmonella enterica serovar Typhi strains Ty2 and CT18.</title>
        <authorList>
            <person name="Deng W."/>
            <person name="Liou S.-R."/>
            <person name="Plunkett G. III"/>
            <person name="Mayhew G.F."/>
            <person name="Rose D.J."/>
            <person name="Burland V."/>
            <person name="Kodoyianni V."/>
            <person name="Schwartz D.C."/>
            <person name="Blattner F.R."/>
        </authorList>
    </citation>
    <scope>NUCLEOTIDE SEQUENCE [LARGE SCALE GENOMIC DNA]</scope>
    <source>
        <strain>ATCC 700931 / Ty2</strain>
    </source>
</reference>
<gene>
    <name evidence="1" type="primary">yeeN</name>
    <name type="ordered locus">STY4855</name>
    <name type="ordered locus">t4549</name>
</gene>
<sequence>MGRKWANIVAKKTAKDGATSKVYAKFGVEIYAAAKQGEPDPESNSALKFVIERAKQAQVPKHVIDKAIDKAKGGGDETFVQGRYEGFGPNGSMVIAETLTSNVNRTIANIRTIFNKKGGNIGAAGAVSYMFDNTGVIVFKGTDPDHIFEILLDAEVDVRDVTEEEGNIVIYTEATDLHKGIAALKAAGITEFSTTELEMIAQSDVELSPEDLEIFEGLVDALEDDDDVQKVYHNVANL</sequence>
<comment type="subcellular location">
    <subcellularLocation>
        <location evidence="1">Cytoplasm</location>
    </subcellularLocation>
</comment>
<comment type="similarity">
    <text evidence="1">Belongs to the TACO1 family. YeeN subfamily.</text>
</comment>
<comment type="sequence caution" evidence="2">
    <conflict type="erroneous initiation">
        <sequence resource="EMBL-CDS" id="AAO71987"/>
    </conflict>
</comment>
<comment type="sequence caution" evidence="2">
    <conflict type="erroneous initiation">
        <sequence resource="EMBL-CDS" id="CAD06974"/>
    </conflict>
</comment>
<keyword id="KW-0963">Cytoplasm</keyword>
<keyword id="KW-0238">DNA-binding</keyword>
<keyword id="KW-0804">Transcription</keyword>
<keyword id="KW-0805">Transcription regulation</keyword>
<protein>
    <recommendedName>
        <fullName evidence="1">Probable transcriptional regulatory protein YeeN</fullName>
    </recommendedName>
</protein>
<evidence type="ECO:0000255" key="1">
    <source>
        <dbReference type="HAMAP-Rule" id="MF_00918"/>
    </source>
</evidence>
<evidence type="ECO:0000305" key="2"/>
<feature type="chain" id="PRO_0000175884" description="Probable transcriptional regulatory protein YeeN">
    <location>
        <begin position="1"/>
        <end position="238"/>
    </location>
</feature>
<organism>
    <name type="scientific">Salmonella typhi</name>
    <dbReference type="NCBI Taxonomy" id="90370"/>
    <lineage>
        <taxon>Bacteria</taxon>
        <taxon>Pseudomonadati</taxon>
        <taxon>Pseudomonadota</taxon>
        <taxon>Gammaproteobacteria</taxon>
        <taxon>Enterobacterales</taxon>
        <taxon>Enterobacteriaceae</taxon>
        <taxon>Salmonella</taxon>
    </lineage>
</organism>
<proteinExistence type="inferred from homology"/>
<dbReference type="EMBL" id="AL513382">
    <property type="protein sequence ID" value="CAD06974.1"/>
    <property type="status" value="ALT_INIT"/>
    <property type="molecule type" value="Genomic_DNA"/>
</dbReference>
<dbReference type="EMBL" id="AE014613">
    <property type="protein sequence ID" value="AAO71987.1"/>
    <property type="status" value="ALT_INIT"/>
    <property type="molecule type" value="Genomic_DNA"/>
</dbReference>
<dbReference type="RefSeq" id="NP_458924.3">
    <property type="nucleotide sequence ID" value="NC_003198.1"/>
</dbReference>
<dbReference type="RefSeq" id="WP_000532938.1">
    <property type="nucleotide sequence ID" value="NZ_WSUR01000016.1"/>
</dbReference>
<dbReference type="SMR" id="Q8Z0Y7"/>
<dbReference type="STRING" id="220341.gene:17588675"/>
<dbReference type="KEGG" id="stt:t4549"/>
<dbReference type="KEGG" id="sty:STY4855"/>
<dbReference type="PATRIC" id="fig|220341.7.peg.4970"/>
<dbReference type="eggNOG" id="COG0217">
    <property type="taxonomic scope" value="Bacteria"/>
</dbReference>
<dbReference type="HOGENOM" id="CLU_062974_2_0_6"/>
<dbReference type="OMA" id="FGPGGCM"/>
<dbReference type="Proteomes" id="UP000000541">
    <property type="component" value="Chromosome"/>
</dbReference>
<dbReference type="Proteomes" id="UP000002670">
    <property type="component" value="Chromosome"/>
</dbReference>
<dbReference type="GO" id="GO:0005829">
    <property type="term" value="C:cytosol"/>
    <property type="evidence" value="ECO:0007669"/>
    <property type="project" value="TreeGrafter"/>
</dbReference>
<dbReference type="GO" id="GO:0003677">
    <property type="term" value="F:DNA binding"/>
    <property type="evidence" value="ECO:0007669"/>
    <property type="project" value="UniProtKB-UniRule"/>
</dbReference>
<dbReference type="GO" id="GO:0006355">
    <property type="term" value="P:regulation of DNA-templated transcription"/>
    <property type="evidence" value="ECO:0007669"/>
    <property type="project" value="UniProtKB-UniRule"/>
</dbReference>
<dbReference type="FunFam" id="1.10.10.200:FF:000003">
    <property type="entry name" value="Probable transcriptional regulatory protein YeeN"/>
    <property type="match status" value="1"/>
</dbReference>
<dbReference type="FunFam" id="3.30.70.980:FF:000004">
    <property type="entry name" value="Probable transcriptional regulatory protein YeeN"/>
    <property type="match status" value="1"/>
</dbReference>
<dbReference type="Gene3D" id="1.10.10.200">
    <property type="match status" value="1"/>
</dbReference>
<dbReference type="Gene3D" id="3.30.70.980">
    <property type="match status" value="2"/>
</dbReference>
<dbReference type="HAMAP" id="MF_00693">
    <property type="entry name" value="Transcrip_reg_TACO1"/>
    <property type="match status" value="1"/>
</dbReference>
<dbReference type="HAMAP" id="MF_00918">
    <property type="entry name" value="Transcrip_reg_TACO1_YeeN"/>
    <property type="match status" value="1"/>
</dbReference>
<dbReference type="InterPro" id="IPR017856">
    <property type="entry name" value="Integrase-like_N"/>
</dbReference>
<dbReference type="InterPro" id="IPR048300">
    <property type="entry name" value="TACO1_YebC-like_2nd/3rd_dom"/>
</dbReference>
<dbReference type="InterPro" id="IPR049083">
    <property type="entry name" value="TACO1_YebC_N"/>
</dbReference>
<dbReference type="InterPro" id="IPR002876">
    <property type="entry name" value="Transcrip_reg_TACO1-like"/>
</dbReference>
<dbReference type="InterPro" id="IPR026564">
    <property type="entry name" value="Transcrip_reg_TACO1-like_dom3"/>
</dbReference>
<dbReference type="InterPro" id="IPR026562">
    <property type="entry name" value="Transcrip_reg_TACO1_YeeN"/>
</dbReference>
<dbReference type="InterPro" id="IPR029072">
    <property type="entry name" value="YebC-like"/>
</dbReference>
<dbReference type="NCBIfam" id="NF009044">
    <property type="entry name" value="PRK12378.1"/>
    <property type="match status" value="1"/>
</dbReference>
<dbReference type="NCBIfam" id="TIGR01033">
    <property type="entry name" value="YebC/PmpR family DNA-binding transcriptional regulator"/>
    <property type="match status" value="1"/>
</dbReference>
<dbReference type="PANTHER" id="PTHR12532">
    <property type="entry name" value="TRANSLATIONAL ACTIVATOR OF CYTOCHROME C OXIDASE 1"/>
    <property type="match status" value="1"/>
</dbReference>
<dbReference type="PANTHER" id="PTHR12532:SF0">
    <property type="entry name" value="TRANSLATIONAL ACTIVATOR OF CYTOCHROME C OXIDASE 1"/>
    <property type="match status" value="1"/>
</dbReference>
<dbReference type="Pfam" id="PF20772">
    <property type="entry name" value="TACO1_YebC_N"/>
    <property type="match status" value="1"/>
</dbReference>
<dbReference type="Pfam" id="PF01709">
    <property type="entry name" value="Transcrip_reg"/>
    <property type="match status" value="1"/>
</dbReference>
<dbReference type="SUPFAM" id="SSF75625">
    <property type="entry name" value="YebC-like"/>
    <property type="match status" value="1"/>
</dbReference>